<comment type="function">
    <text evidence="1">Catalyzes the transfer of an acyl group from acyl-phosphate (acyl-PO(4)) to glycerol-3-phosphate (G3P) to form lysophosphatidic acid (LPA). This enzyme utilizes acyl-phosphate as fatty acyl donor, but not acyl-CoA or acyl-ACP.</text>
</comment>
<comment type="catalytic activity">
    <reaction evidence="1">
        <text>an acyl phosphate + sn-glycerol 3-phosphate = a 1-acyl-sn-glycero-3-phosphate + phosphate</text>
        <dbReference type="Rhea" id="RHEA:34075"/>
        <dbReference type="ChEBI" id="CHEBI:43474"/>
        <dbReference type="ChEBI" id="CHEBI:57597"/>
        <dbReference type="ChEBI" id="CHEBI:57970"/>
        <dbReference type="ChEBI" id="CHEBI:59918"/>
        <dbReference type="EC" id="2.3.1.275"/>
    </reaction>
</comment>
<comment type="pathway">
    <text evidence="1">Lipid metabolism; phospholipid metabolism.</text>
</comment>
<comment type="subunit">
    <text evidence="1">Probably interacts with PlsX.</text>
</comment>
<comment type="subcellular location">
    <subcellularLocation>
        <location evidence="1">Cell inner membrane</location>
        <topology evidence="1">Multi-pass membrane protein</topology>
    </subcellularLocation>
</comment>
<comment type="similarity">
    <text evidence="1">Belongs to the PlsY family.</text>
</comment>
<gene>
    <name evidence="1" type="primary">plsY</name>
    <name type="ordered locus">Oant_3668</name>
</gene>
<name>PLSY_BRUA4</name>
<feature type="chain" id="PRO_1000064201" description="Glycerol-3-phosphate acyltransferase">
    <location>
        <begin position="1"/>
        <end position="201"/>
    </location>
</feature>
<feature type="transmembrane region" description="Helical" evidence="1">
    <location>
        <begin position="9"/>
        <end position="29"/>
    </location>
</feature>
<feature type="transmembrane region" description="Helical" evidence="1">
    <location>
        <begin position="60"/>
        <end position="80"/>
    </location>
</feature>
<feature type="transmembrane region" description="Helical" evidence="1">
    <location>
        <begin position="86"/>
        <end position="106"/>
    </location>
</feature>
<feature type="transmembrane region" description="Helical" evidence="1">
    <location>
        <begin position="116"/>
        <end position="136"/>
    </location>
</feature>
<feature type="transmembrane region" description="Helical" evidence="1">
    <location>
        <begin position="153"/>
        <end position="173"/>
    </location>
</feature>
<organism>
    <name type="scientific">Brucella anthropi (strain ATCC 49188 / DSM 6882 / CCUG 24695 / JCM 21032 / LMG 3331 / NBRC 15819 / NCTC 12168 / Alc 37)</name>
    <name type="common">Ochrobactrum anthropi</name>
    <dbReference type="NCBI Taxonomy" id="439375"/>
    <lineage>
        <taxon>Bacteria</taxon>
        <taxon>Pseudomonadati</taxon>
        <taxon>Pseudomonadota</taxon>
        <taxon>Alphaproteobacteria</taxon>
        <taxon>Hyphomicrobiales</taxon>
        <taxon>Brucellaceae</taxon>
        <taxon>Brucella/Ochrobactrum group</taxon>
        <taxon>Brucella</taxon>
    </lineage>
</organism>
<protein>
    <recommendedName>
        <fullName evidence="1">Glycerol-3-phosphate acyltransferase</fullName>
    </recommendedName>
    <alternativeName>
        <fullName evidence="1">Acyl-PO4 G3P acyltransferase</fullName>
    </alternativeName>
    <alternativeName>
        <fullName evidence="1">Acyl-phosphate--glycerol-3-phosphate acyltransferase</fullName>
    </alternativeName>
    <alternativeName>
        <fullName evidence="1">G3P acyltransferase</fullName>
        <shortName evidence="1">GPAT</shortName>
        <ecNumber evidence="1">2.3.1.275</ecNumber>
    </alternativeName>
    <alternativeName>
        <fullName evidence="1">Lysophosphatidic acid synthase</fullName>
        <shortName evidence="1">LPA synthase</shortName>
    </alternativeName>
</protein>
<proteinExistence type="inferred from homology"/>
<evidence type="ECO:0000255" key="1">
    <source>
        <dbReference type="HAMAP-Rule" id="MF_01043"/>
    </source>
</evidence>
<keyword id="KW-0997">Cell inner membrane</keyword>
<keyword id="KW-1003">Cell membrane</keyword>
<keyword id="KW-0444">Lipid biosynthesis</keyword>
<keyword id="KW-0443">Lipid metabolism</keyword>
<keyword id="KW-0472">Membrane</keyword>
<keyword id="KW-0594">Phospholipid biosynthesis</keyword>
<keyword id="KW-1208">Phospholipid metabolism</keyword>
<keyword id="KW-1185">Reference proteome</keyword>
<keyword id="KW-0808">Transferase</keyword>
<keyword id="KW-0812">Transmembrane</keyword>
<keyword id="KW-1133">Transmembrane helix</keyword>
<sequence>MAEPGFLSLTLIGALVFGYFLGSIPFGLILTRLAGLGDVRSIGSGNIGATNVLRTGNKKLAAATLIFDMLKGTVAVLVASRYGPDAAIGAGFGAFIGHLFPVWIGFKGGKGVATYLGVLIGLAWPGALVFAAVWIVTALLTRYSSLAALIASIVVPIALYSRGYPAIAVLFAIMTVIVIFKHKANITRLLNGTESKIGAKG</sequence>
<dbReference type="EC" id="2.3.1.275" evidence="1"/>
<dbReference type="EMBL" id="CP000759">
    <property type="protein sequence ID" value="ABS16374.1"/>
    <property type="molecule type" value="Genomic_DNA"/>
</dbReference>
<dbReference type="RefSeq" id="WP_010658867.1">
    <property type="nucleotide sequence ID" value="NC_009668.1"/>
</dbReference>
<dbReference type="SMR" id="A6X570"/>
<dbReference type="STRING" id="439375.Oant_3668"/>
<dbReference type="GeneID" id="61314999"/>
<dbReference type="KEGG" id="oan:Oant_3668"/>
<dbReference type="PATRIC" id="fig|439375.7.peg.3831"/>
<dbReference type="eggNOG" id="COG0344">
    <property type="taxonomic scope" value="Bacteria"/>
</dbReference>
<dbReference type="HOGENOM" id="CLU_081254_1_0_5"/>
<dbReference type="UniPathway" id="UPA00085"/>
<dbReference type="Proteomes" id="UP000002301">
    <property type="component" value="Chromosome 2"/>
</dbReference>
<dbReference type="GO" id="GO:0005886">
    <property type="term" value="C:plasma membrane"/>
    <property type="evidence" value="ECO:0007669"/>
    <property type="project" value="UniProtKB-SubCell"/>
</dbReference>
<dbReference type="GO" id="GO:0043772">
    <property type="term" value="F:acyl-phosphate glycerol-3-phosphate acyltransferase activity"/>
    <property type="evidence" value="ECO:0007669"/>
    <property type="project" value="UniProtKB-UniRule"/>
</dbReference>
<dbReference type="GO" id="GO:0008654">
    <property type="term" value="P:phospholipid biosynthetic process"/>
    <property type="evidence" value="ECO:0007669"/>
    <property type="project" value="UniProtKB-UniRule"/>
</dbReference>
<dbReference type="HAMAP" id="MF_01043">
    <property type="entry name" value="PlsY"/>
    <property type="match status" value="1"/>
</dbReference>
<dbReference type="InterPro" id="IPR003811">
    <property type="entry name" value="G3P_acylTferase_PlsY"/>
</dbReference>
<dbReference type="NCBIfam" id="TIGR00023">
    <property type="entry name" value="glycerol-3-phosphate 1-O-acyltransferase PlsY"/>
    <property type="match status" value="1"/>
</dbReference>
<dbReference type="PANTHER" id="PTHR30309:SF0">
    <property type="entry name" value="GLYCEROL-3-PHOSPHATE ACYLTRANSFERASE-RELATED"/>
    <property type="match status" value="1"/>
</dbReference>
<dbReference type="PANTHER" id="PTHR30309">
    <property type="entry name" value="INNER MEMBRANE PROTEIN YGIH"/>
    <property type="match status" value="1"/>
</dbReference>
<dbReference type="Pfam" id="PF02660">
    <property type="entry name" value="G3P_acyltransf"/>
    <property type="match status" value="1"/>
</dbReference>
<dbReference type="SMART" id="SM01207">
    <property type="entry name" value="G3P_acyltransf"/>
    <property type="match status" value="1"/>
</dbReference>
<accession>A6X570</accession>
<reference key="1">
    <citation type="journal article" date="2011" name="J. Bacteriol.">
        <title>Genome of Ochrobactrum anthropi ATCC 49188 T, a versatile opportunistic pathogen and symbiont of several eukaryotic hosts.</title>
        <authorList>
            <person name="Chain P.S."/>
            <person name="Lang D.M."/>
            <person name="Comerci D.J."/>
            <person name="Malfatti S.A."/>
            <person name="Vergez L.M."/>
            <person name="Shin M."/>
            <person name="Ugalde R.A."/>
            <person name="Garcia E."/>
            <person name="Tolmasky M.E."/>
        </authorList>
    </citation>
    <scope>NUCLEOTIDE SEQUENCE [LARGE SCALE GENOMIC DNA]</scope>
    <source>
        <strain>ATCC 49188 / DSM 6882 / CCUG 24695 / JCM 21032 / LMG 3331 / NBRC 15819 / NCTC 12168 / Alc 37</strain>
    </source>
</reference>